<sequence>MAALPSLRQLSYLVTLSETLHFTEAARRSFVTQSTLSGGIMELERLLGGVLVERDRQNVRLTPLGEQVVARARVLLADAQDLMRLSREMSEPLTGDLHLGIIPTIAPFILTQLLDEVHKQLPKIQLHLHEAQSEKIVERLEHGNLDMVVLALPFDTRGLKVADIAKENLYLVCNKHDKHSVNAHSLDDLDLSRLMLLEEGHCLRDHALSACPIGERKNDNRLKASSLPTLVEMVSSNLGFTLLPEIAINTHMLKFNDDLLVKEIENAPSRTLALITRKSTPLQSEFDVILDILKRITATLH</sequence>
<keyword id="KW-0238">DNA-binding</keyword>
<keyword id="KW-0804">Transcription</keyword>
<keyword id="KW-0805">Transcription regulation</keyword>
<proteinExistence type="inferred from homology"/>
<reference key="1">
    <citation type="submission" date="1995-06" db="EMBL/GenBank/DDBJ databases">
        <authorList>
            <person name="Kok R.G."/>
            <person name="Bart A."/>
            <person name="Hellingwerf K.J."/>
        </authorList>
    </citation>
    <scope>NUCLEOTIDE SEQUENCE [GENOMIC DNA]</scope>
</reference>
<reference key="2">
    <citation type="submission" date="1996-05" db="EMBL/GenBank/DDBJ databases">
        <authorList>
            <person name="Geissdoerfer W."/>
        </authorList>
    </citation>
    <scope>NUCLEOTIDE SEQUENCE [GENOMIC DNA]</scope>
</reference>
<reference key="3">
    <citation type="journal article" date="2004" name="Nucleic Acids Res.">
        <title>Unique features revealed by the genome sequence of Acinetobacter sp. ADP1, a versatile and naturally transformation competent bacterium.</title>
        <authorList>
            <person name="Barbe V."/>
            <person name="Vallenet D."/>
            <person name="Fonknechten N."/>
            <person name="Kreimeyer A."/>
            <person name="Oztas S."/>
            <person name="Labarre L."/>
            <person name="Cruveiller S."/>
            <person name="Robert C."/>
            <person name="Duprat S."/>
            <person name="Wincker P."/>
            <person name="Ornston L.N."/>
            <person name="Weissenbach J."/>
            <person name="Marliere P."/>
            <person name="Cohen G.N."/>
            <person name="Medigue C."/>
        </authorList>
    </citation>
    <scope>NUCLEOTIDE SEQUENCE [LARGE SCALE GENOMIC DNA]</scope>
    <source>
        <strain>ATCC 33305 / BD413 / ADP1</strain>
    </source>
</reference>
<organism>
    <name type="scientific">Acinetobacter baylyi (strain ATCC 33305 / BD413 / ADP1)</name>
    <dbReference type="NCBI Taxonomy" id="62977"/>
    <lineage>
        <taxon>Bacteria</taxon>
        <taxon>Pseudomonadati</taxon>
        <taxon>Pseudomonadota</taxon>
        <taxon>Gammaproteobacteria</taxon>
        <taxon>Moraxellales</taxon>
        <taxon>Moraxellaceae</taxon>
        <taxon>Acinetobacter</taxon>
    </lineage>
</organism>
<accession>P52667</accession>
<name>ESTR_ACIAD</name>
<comment type="function">
    <text>Transcriptional regulator of the esterase operon.</text>
</comment>
<comment type="similarity">
    <text evidence="2">Belongs to the LysR transcriptional regulatory family.</text>
</comment>
<gene>
    <name type="primary">estR</name>
    <name type="ordered locus">ACIAD1063</name>
</gene>
<feature type="chain" id="PRO_0000105622" description="HTH-type transcriptional regulator EstR">
    <location>
        <begin position="1"/>
        <end position="301"/>
    </location>
</feature>
<feature type="domain" description="HTH lysR-type" evidence="1">
    <location>
        <begin position="5"/>
        <end position="62"/>
    </location>
</feature>
<feature type="DNA-binding region" description="H-T-H motif" evidence="1">
    <location>
        <begin position="22"/>
        <end position="41"/>
    </location>
</feature>
<evidence type="ECO:0000255" key="1">
    <source>
        <dbReference type="PROSITE-ProRule" id="PRU00253"/>
    </source>
</evidence>
<evidence type="ECO:0000305" key="2"/>
<protein>
    <recommendedName>
        <fullName>HTH-type transcriptional regulator EstR</fullName>
    </recommendedName>
    <alternativeName>
        <fullName>Esterase operon transcriptional regulator</fullName>
    </alternativeName>
</protein>
<dbReference type="EMBL" id="X88895">
    <property type="protein sequence ID" value="CAA61352.1"/>
    <property type="molecule type" value="Genomic_DNA"/>
</dbReference>
<dbReference type="EMBL" id="Z46863">
    <property type="protein sequence ID" value="CAA86928.1"/>
    <property type="molecule type" value="Genomic_DNA"/>
</dbReference>
<dbReference type="EMBL" id="CR543861">
    <property type="protein sequence ID" value="CAG67951.1"/>
    <property type="molecule type" value="Genomic_DNA"/>
</dbReference>
<dbReference type="PIR" id="S57531">
    <property type="entry name" value="S57531"/>
</dbReference>
<dbReference type="RefSeq" id="WP_004921647.1">
    <property type="nucleotide sequence ID" value="NC_005966.1"/>
</dbReference>
<dbReference type="SMR" id="P52667"/>
<dbReference type="STRING" id="202950.GCA_001485005_01302"/>
<dbReference type="GeneID" id="45233505"/>
<dbReference type="KEGG" id="aci:ACIAD1063"/>
<dbReference type="eggNOG" id="COG0583">
    <property type="taxonomic scope" value="Bacteria"/>
</dbReference>
<dbReference type="HOGENOM" id="CLU_039613_6_4_6"/>
<dbReference type="OrthoDB" id="9775392at2"/>
<dbReference type="BioCyc" id="ASP62977:ACIAD_RS04900-MONOMER"/>
<dbReference type="Proteomes" id="UP000000430">
    <property type="component" value="Chromosome"/>
</dbReference>
<dbReference type="GO" id="GO:0032993">
    <property type="term" value="C:protein-DNA complex"/>
    <property type="evidence" value="ECO:0007669"/>
    <property type="project" value="TreeGrafter"/>
</dbReference>
<dbReference type="GO" id="GO:0003677">
    <property type="term" value="F:DNA binding"/>
    <property type="evidence" value="ECO:0007669"/>
    <property type="project" value="UniProtKB-KW"/>
</dbReference>
<dbReference type="GO" id="GO:0003700">
    <property type="term" value="F:DNA-binding transcription factor activity"/>
    <property type="evidence" value="ECO:0007669"/>
    <property type="project" value="InterPro"/>
</dbReference>
<dbReference type="CDD" id="cd08411">
    <property type="entry name" value="PBP2_OxyR"/>
    <property type="match status" value="1"/>
</dbReference>
<dbReference type="FunFam" id="1.10.10.10:FF:000001">
    <property type="entry name" value="LysR family transcriptional regulator"/>
    <property type="match status" value="1"/>
</dbReference>
<dbReference type="Gene3D" id="3.40.190.10">
    <property type="entry name" value="Periplasmic binding protein-like II"/>
    <property type="match status" value="2"/>
</dbReference>
<dbReference type="Gene3D" id="1.10.10.10">
    <property type="entry name" value="Winged helix-like DNA-binding domain superfamily/Winged helix DNA-binding domain"/>
    <property type="match status" value="1"/>
</dbReference>
<dbReference type="InterPro" id="IPR005119">
    <property type="entry name" value="LysR_subst-bd"/>
</dbReference>
<dbReference type="InterPro" id="IPR000847">
    <property type="entry name" value="Tscrpt_reg_HTH_LysR"/>
</dbReference>
<dbReference type="InterPro" id="IPR036388">
    <property type="entry name" value="WH-like_DNA-bd_sf"/>
</dbReference>
<dbReference type="InterPro" id="IPR036390">
    <property type="entry name" value="WH_DNA-bd_sf"/>
</dbReference>
<dbReference type="PANTHER" id="PTHR30346">
    <property type="entry name" value="TRANSCRIPTIONAL DUAL REGULATOR HCAR-RELATED"/>
    <property type="match status" value="1"/>
</dbReference>
<dbReference type="PANTHER" id="PTHR30346:SF10">
    <property type="entry name" value="TRANSCRIPTIONAL REGULATOR OF OXIDATIVE STRESS OXYR"/>
    <property type="match status" value="1"/>
</dbReference>
<dbReference type="Pfam" id="PF00126">
    <property type="entry name" value="HTH_1"/>
    <property type="match status" value="1"/>
</dbReference>
<dbReference type="Pfam" id="PF03466">
    <property type="entry name" value="LysR_substrate"/>
    <property type="match status" value="1"/>
</dbReference>
<dbReference type="SUPFAM" id="SSF53850">
    <property type="entry name" value="Periplasmic binding protein-like II"/>
    <property type="match status" value="1"/>
</dbReference>
<dbReference type="SUPFAM" id="SSF46785">
    <property type="entry name" value="Winged helix' DNA-binding domain"/>
    <property type="match status" value="1"/>
</dbReference>
<dbReference type="PROSITE" id="PS50931">
    <property type="entry name" value="HTH_LYSR"/>
    <property type="match status" value="1"/>
</dbReference>